<evidence type="ECO:0000269" key="1">
    <source>
    </source>
</evidence>
<evidence type="ECO:0000303" key="2">
    <source>
    </source>
</evidence>
<evidence type="ECO:0000303" key="3">
    <source>
    </source>
</evidence>
<evidence type="ECO:0000305" key="4"/>
<evidence type="ECO:0000305" key="5">
    <source>
    </source>
</evidence>
<evidence type="ECO:0007744" key="6">
    <source>
        <dbReference type="PDB" id="7SA4"/>
    </source>
</evidence>
<sequence>MILLQLSSAQGPEECCLAVRKALDRLIKEATRQDVAVTVLETETGRYSDTLRSALISLDGDNAWALSESWCGTIQWICPSPYRPHHGRKNWFLGIGRFTADEQEQSDAIRYETLRSSGPGGQHVNKTDSAVRATHLASGISVKVQSERSQHANKRLARLLIAWKLEQQQQENSAALKSQRRMFHHQIERGNPRRTFTGMAFIEG</sequence>
<accession>P0DX90</accession>
<feature type="chain" id="PRO_0000459655" description="Peptide chain release factor homolog">
    <location>
        <begin position="1"/>
        <end position="204"/>
    </location>
</feature>
<feature type="region of interest" description="rRNA-recognition domain, N-terminus" evidence="5">
    <location>
        <begin position="2"/>
        <end position="98"/>
    </location>
</feature>
<feature type="region of interest" description="Linker 1" evidence="5">
    <location>
        <begin position="99"/>
        <end position="107"/>
    </location>
</feature>
<feature type="region of interest" description="GGQ domain" evidence="5">
    <location>
        <begin position="108"/>
        <end position="161"/>
    </location>
</feature>
<feature type="region of interest" description="Linker 2" evidence="5">
    <location>
        <begin position="162"/>
        <end position="179"/>
    </location>
</feature>
<feature type="region of interest" description="rRNA-recognition domain, C-terminus" evidence="5">
    <location>
        <begin position="180"/>
        <end position="204"/>
    </location>
</feature>
<feature type="short sequence motif" description="GGQ motif">
    <location>
        <begin position="120"/>
        <end position="122"/>
    </location>
</feature>
<feature type="mutagenesis site" description="No longer aids RtcB2 to repair damaged 16S rRNA in 70S ribosomes in vitro, or in reversing growth inhibition due to ColE3 expression in vivo." evidence="1">
    <original>Q</original>
    <variation>E</variation>
    <variation>N</variation>
    <location>
        <position position="122"/>
    </location>
</feature>
<gene>
    <name evidence="2" type="primary">prfH</name>
    <name type="ORF">DR76_4672</name>
</gene>
<dbReference type="EMBL" id="CP009072">
    <property type="protein sequence ID" value="AIL17476.1"/>
    <property type="molecule type" value="Genomic_DNA"/>
</dbReference>
<dbReference type="RefSeq" id="WP_000602135.1">
    <property type="nucleotide sequence ID" value="NZ_LRDO01000042.1"/>
</dbReference>
<dbReference type="PDB" id="7SA4">
    <property type="method" value="EM"/>
    <property type="resolution" value="2.55 A"/>
    <property type="chains" value="8=1-204"/>
</dbReference>
<dbReference type="PDBsum" id="7SA4"/>
<dbReference type="SMR" id="P0DX90"/>
<dbReference type="GO" id="GO:0019843">
    <property type="term" value="F:rRNA binding"/>
    <property type="evidence" value="ECO:0007669"/>
    <property type="project" value="UniProtKB-KW"/>
</dbReference>
<dbReference type="GO" id="GO:0003747">
    <property type="term" value="F:translation release factor activity"/>
    <property type="evidence" value="ECO:0007669"/>
    <property type="project" value="InterPro"/>
</dbReference>
<dbReference type="GO" id="GO:0042245">
    <property type="term" value="P:RNA repair"/>
    <property type="evidence" value="ECO:0007669"/>
    <property type="project" value="UniProtKB-KW"/>
</dbReference>
<dbReference type="FunFam" id="3.30.160.20:FF:000052">
    <property type="entry name" value="Peptide chain release factor H"/>
    <property type="match status" value="1"/>
</dbReference>
<dbReference type="Gene3D" id="3.30.160.20">
    <property type="match status" value="1"/>
</dbReference>
<dbReference type="Gene3D" id="3.30.70.1660">
    <property type="match status" value="1"/>
</dbReference>
<dbReference type="InterPro" id="IPR000352">
    <property type="entry name" value="Pep_chain_release_fac_I"/>
</dbReference>
<dbReference type="InterPro" id="IPR045853">
    <property type="entry name" value="Pep_chain_release_fac_I_sf"/>
</dbReference>
<dbReference type="InterPro" id="IPR017509">
    <property type="entry name" value="PrfH"/>
</dbReference>
<dbReference type="InterPro" id="IPR050057">
    <property type="entry name" value="Prokaryotic/Mito_RF"/>
</dbReference>
<dbReference type="NCBIfam" id="TIGR03072">
    <property type="entry name" value="release_prfH"/>
    <property type="match status" value="1"/>
</dbReference>
<dbReference type="PANTHER" id="PTHR43804">
    <property type="entry name" value="LD18447P"/>
    <property type="match status" value="1"/>
</dbReference>
<dbReference type="PANTHER" id="PTHR43804:SF9">
    <property type="entry name" value="PEPTIDE CHAIN RELEASE FACTOR HOMOLOG-RELATED"/>
    <property type="match status" value="1"/>
</dbReference>
<dbReference type="Pfam" id="PF00472">
    <property type="entry name" value="RF-1"/>
    <property type="match status" value="1"/>
</dbReference>
<dbReference type="SUPFAM" id="SSF75620">
    <property type="entry name" value="Release factor"/>
    <property type="match status" value="1"/>
</dbReference>
<dbReference type="PROSITE" id="PS00745">
    <property type="entry name" value="RF_PROK_I"/>
    <property type="match status" value="1"/>
</dbReference>
<keyword id="KW-0002">3D-structure</keyword>
<keyword id="KW-0648">Protein biosynthesis</keyword>
<keyword id="KW-0692">RNA repair</keyword>
<keyword id="KW-0694">RNA-binding</keyword>
<keyword id="KW-0699">rRNA-binding</keyword>
<reference key="1">
    <citation type="journal article" date="2014" name="Genome Announc.">
        <title>Complete Genome Assembly of Escherichia coli ATCC 25922, a Serotype O6 Reference Strain.</title>
        <authorList>
            <person name="Minogue T.D."/>
            <person name="Daligault H.A."/>
            <person name="Davenport K.W."/>
            <person name="Bishop-Lilly K.A."/>
            <person name="Broomall S.M."/>
            <person name="Bruce D.C."/>
            <person name="Chain P.S."/>
            <person name="Chertkov O."/>
            <person name="Coyne S.R."/>
            <person name="Freitas T."/>
            <person name="Frey K.G."/>
            <person name="Gibbons H.S."/>
            <person name="Jaissle J."/>
            <person name="Redden C.L."/>
            <person name="Rosenzweig C.N."/>
            <person name="Xu Y."/>
            <person name="Johnson S.L."/>
        </authorList>
    </citation>
    <scope>NUCLEOTIDE SEQUENCE [LARGE SCALE GENOMIC DNA]</scope>
    <source>
        <strain>ATCC 25922 / DSM 1103 / LMG 8223 / NCIMB 12210 / NCTC 12241 / WDCM 00013 / Seattle 1946</strain>
    </source>
</reference>
<reference evidence="6" key="2">
    <citation type="journal article" date="2022" name="Proc. Natl. Acad. Sci. U.S.A.">
        <title>Sequential rescue and repair of stalled and damaged ribosome by bacterial PrfH and RtcB.</title>
        <authorList>
            <person name="Tian Y."/>
            <person name="Zeng F."/>
            <person name="Raybarman A."/>
            <person name="Fatma S."/>
            <person name="Carruthers A."/>
            <person name="Li Q."/>
            <person name="Huang R.H."/>
        </authorList>
    </citation>
    <scope>STRUCTURE BY ELECTRON MICROSCOPY (2.55 ANGSTROMS) IN DAMAGED 70S RIBOSOMES</scope>
    <scope>FUNCTION</scope>
    <scope>BIOPHYSICOCHEMICAL PROPERTIES</scope>
    <scope>SUBUNIT</scope>
    <scope>DOMAIN</scope>
    <scope>MUTAGENESIS OF GLN-122</scope>
    <source>
        <strain>ATCC 25922 / DSM 1103 / LMG 8223 / NCIMB 12210 / NCTC 12241 / WDCM 00013 / Seattle 1946</strain>
    </source>
</reference>
<proteinExistence type="evidence at protein level"/>
<protein>
    <recommendedName>
        <fullName evidence="4">Peptide chain release factor homolog</fullName>
        <shortName evidence="3">PrfH</shortName>
    </recommendedName>
</protein>
<name>PRFH_ECOS1</name>
<organism>
    <name type="scientific">Escherichia coli (strain ATCC 25922 / DSM 1103 / LMG 8223 / NCIMB 12210 / NCTC 12241 / WDCM 00013 / Seattle 1946)</name>
    <dbReference type="NCBI Taxonomy" id="1322345"/>
    <lineage>
        <taxon>Bacteria</taxon>
        <taxon>Pseudomonadati</taxon>
        <taxon>Pseudomonadota</taxon>
        <taxon>Gammaproteobacteria</taxon>
        <taxon>Enterobacterales</taxon>
        <taxon>Enterobacteriaceae</taxon>
        <taxon>Escherichia</taxon>
    </lineage>
</organism>
<comment type="function">
    <text evidence="1 5">Peptide chain release-like factor that acts on 70S ribosomes with specific damage to their decoding center (cleavage of 16S rRNA between adenine-1493 and guanosine-1494, E.coli 16S rRNA numbering) (PubMed:35858322). Probably acts as a peptidyl-tRNA hydrolase, allowing release of the nascent chain and dissociation of the 30S and 50S subunits (Probable) (PubMed:35858322). Can release mRNA as short as 19 nucleotides (nt, mRNA-19, which has a single amino acid in the P-site and only a single nt in the A-site) from the ribosome (PubMed:35858322). This specific cleavage is inflicted by CdiA (ECL_04451) or by colicin E3-type (ColE3) proteins (PubMed:35858322). In vivo the PrfH-RtcB2 pair restores growth in the presence of ribotoxins that specifically create this damage (PubMed:35858322).</text>
</comment>
<comment type="biophysicochemical properties">
    <kinetics>
        <KM evidence="1">1.78 uM for mRNA-25</KM>
        <KM evidence="1">1.63 uM for mRNA-22</KM>
        <KM evidence="1">1.56 uM for mRNA-19</KM>
        <text evidence="1">kcat RNA release is 0.33 sec(-1) for mRNA-25 and 0.42 sec(-1) for mRNA-22 and mRNA-19.</text>
    </kinetics>
</comment>
<comment type="subunit">
    <text evidence="1">Found in the A site of damaged 70S ribosomes, but not in undamaged ribosomes (PubMed:35858322). Contacts (damaged) 16S rRNA, 23S rRNA and ribosomal protein uS12, but not mRNA (PubMed:35858322).</text>
</comment>
<comment type="domain">
    <text evidence="1">Folds similarly to release factors 1 and 2 (RF1 and RF2) (PubMed:35858322).</text>
</comment>
<comment type="similarity">
    <text evidence="4">Belongs to the prokaryotic/mitochondrial release factor family.</text>
</comment>